<reference key="1">
    <citation type="journal article" date="2005" name="Genome Res.">
        <title>Genome sequence of Blochmannia pennsylvanicus indicates parallel evolutionary trends among bacterial mutualists of insects.</title>
        <authorList>
            <person name="Degnan P.H."/>
            <person name="Lazarus A.B."/>
            <person name="Wernegreen J.J."/>
        </authorList>
    </citation>
    <scope>NUCLEOTIDE SEQUENCE [LARGE SCALE GENOMIC DNA]</scope>
    <source>
        <strain>BPEN</strain>
    </source>
</reference>
<keyword id="KW-0285">Flavoprotein</keyword>
<keyword id="KW-0288">FMN</keyword>
<keyword id="KW-0560">Oxidoreductase</keyword>
<keyword id="KW-0664">Pyridoxine biosynthesis</keyword>
<keyword id="KW-1185">Reference proteome</keyword>
<accession>Q492T8</accession>
<feature type="chain" id="PRO_0000167688" description="Pyridoxine/pyridoxamine 5'-phosphate oxidase">
    <location>
        <begin position="1"/>
        <end position="216"/>
    </location>
</feature>
<feature type="binding site" evidence="1">
    <location>
        <begin position="12"/>
        <end position="15"/>
    </location>
    <ligand>
        <name>substrate</name>
    </ligand>
</feature>
<feature type="binding site" evidence="1">
    <location>
        <begin position="65"/>
        <end position="70"/>
    </location>
    <ligand>
        <name>FMN</name>
        <dbReference type="ChEBI" id="CHEBI:58210"/>
    </ligand>
</feature>
<feature type="binding site" evidence="1">
    <location>
        <position position="70"/>
    </location>
    <ligand>
        <name>substrate</name>
    </ligand>
</feature>
<feature type="binding site" evidence="1">
    <location>
        <begin position="80"/>
        <end position="81"/>
    </location>
    <ligand>
        <name>FMN</name>
        <dbReference type="ChEBI" id="CHEBI:58210"/>
    </ligand>
</feature>
<feature type="binding site" evidence="1">
    <location>
        <position position="86"/>
    </location>
    <ligand>
        <name>FMN</name>
        <dbReference type="ChEBI" id="CHEBI:58210"/>
    </ligand>
</feature>
<feature type="binding site" evidence="1">
    <location>
        <position position="87"/>
    </location>
    <ligand>
        <name>FMN</name>
        <dbReference type="ChEBI" id="CHEBI:58210"/>
    </ligand>
</feature>
<feature type="binding site" evidence="1">
    <location>
        <position position="109"/>
    </location>
    <ligand>
        <name>FMN</name>
        <dbReference type="ChEBI" id="CHEBI:58210"/>
    </ligand>
</feature>
<feature type="binding site" evidence="1">
    <location>
        <position position="127"/>
    </location>
    <ligand>
        <name>substrate</name>
    </ligand>
</feature>
<feature type="binding site" evidence="1">
    <location>
        <position position="131"/>
    </location>
    <ligand>
        <name>substrate</name>
    </ligand>
</feature>
<feature type="binding site" evidence="1">
    <location>
        <begin position="144"/>
        <end position="145"/>
    </location>
    <ligand>
        <name>FMN</name>
        <dbReference type="ChEBI" id="CHEBI:58210"/>
    </ligand>
</feature>
<feature type="binding site" evidence="1">
    <location>
        <position position="189"/>
    </location>
    <ligand>
        <name>FMN</name>
        <dbReference type="ChEBI" id="CHEBI:58210"/>
    </ligand>
</feature>
<feature type="binding site" evidence="1">
    <location>
        <begin position="195"/>
        <end position="197"/>
    </location>
    <ligand>
        <name>substrate</name>
    </ligand>
</feature>
<feature type="binding site" evidence="1">
    <location>
        <position position="199"/>
    </location>
    <ligand>
        <name>FMN</name>
        <dbReference type="ChEBI" id="CHEBI:58210"/>
    </ligand>
</feature>
<comment type="function">
    <text evidence="1">Catalyzes the oxidation of either pyridoxine 5'-phosphate (PNP) or pyridoxamine 5'-phosphate (PMP) into pyridoxal 5'-phosphate (PLP).</text>
</comment>
<comment type="catalytic activity">
    <reaction evidence="1">
        <text>pyridoxamine 5'-phosphate + O2 + H2O = pyridoxal 5'-phosphate + H2O2 + NH4(+)</text>
        <dbReference type="Rhea" id="RHEA:15817"/>
        <dbReference type="ChEBI" id="CHEBI:15377"/>
        <dbReference type="ChEBI" id="CHEBI:15379"/>
        <dbReference type="ChEBI" id="CHEBI:16240"/>
        <dbReference type="ChEBI" id="CHEBI:28938"/>
        <dbReference type="ChEBI" id="CHEBI:58451"/>
        <dbReference type="ChEBI" id="CHEBI:597326"/>
        <dbReference type="EC" id="1.4.3.5"/>
    </reaction>
</comment>
<comment type="catalytic activity">
    <reaction evidence="1">
        <text>pyridoxine 5'-phosphate + O2 = pyridoxal 5'-phosphate + H2O2</text>
        <dbReference type="Rhea" id="RHEA:15149"/>
        <dbReference type="ChEBI" id="CHEBI:15379"/>
        <dbReference type="ChEBI" id="CHEBI:16240"/>
        <dbReference type="ChEBI" id="CHEBI:58589"/>
        <dbReference type="ChEBI" id="CHEBI:597326"/>
        <dbReference type="EC" id="1.4.3.5"/>
    </reaction>
</comment>
<comment type="cofactor">
    <cofactor evidence="1">
        <name>FMN</name>
        <dbReference type="ChEBI" id="CHEBI:58210"/>
    </cofactor>
    <text evidence="1">Binds 1 FMN per subunit.</text>
</comment>
<comment type="pathway">
    <text evidence="1">Cofactor metabolism; pyridoxal 5'-phosphate salvage; pyridoxal 5'-phosphate from pyridoxamine 5'-phosphate: step 1/1.</text>
</comment>
<comment type="pathway">
    <text evidence="1">Cofactor metabolism; pyridoxal 5'-phosphate salvage; pyridoxal 5'-phosphate from pyridoxine 5'-phosphate: step 1/1.</text>
</comment>
<comment type="subunit">
    <text evidence="1">Homodimer.</text>
</comment>
<comment type="similarity">
    <text evidence="1">Belongs to the pyridoxamine 5'-phosphate oxidase family.</text>
</comment>
<gene>
    <name evidence="1" type="primary">pdxH</name>
    <name type="ordered locus">BPEN_381</name>
</gene>
<dbReference type="EC" id="1.4.3.5" evidence="1"/>
<dbReference type="EMBL" id="CP000016">
    <property type="protein sequence ID" value="AAZ41005.1"/>
    <property type="molecule type" value="Genomic_DNA"/>
</dbReference>
<dbReference type="SMR" id="Q492T8"/>
<dbReference type="STRING" id="291272.BPEN_381"/>
<dbReference type="KEGG" id="bpn:BPEN_381"/>
<dbReference type="eggNOG" id="COG0259">
    <property type="taxonomic scope" value="Bacteria"/>
</dbReference>
<dbReference type="HOGENOM" id="CLU_032263_2_2_6"/>
<dbReference type="OrthoDB" id="9780392at2"/>
<dbReference type="UniPathway" id="UPA01068">
    <property type="reaction ID" value="UER00304"/>
</dbReference>
<dbReference type="UniPathway" id="UPA01068">
    <property type="reaction ID" value="UER00305"/>
</dbReference>
<dbReference type="Proteomes" id="UP000007794">
    <property type="component" value="Chromosome"/>
</dbReference>
<dbReference type="GO" id="GO:0010181">
    <property type="term" value="F:FMN binding"/>
    <property type="evidence" value="ECO:0007669"/>
    <property type="project" value="UniProtKB-UniRule"/>
</dbReference>
<dbReference type="GO" id="GO:0004733">
    <property type="term" value="F:pyridoxamine phosphate oxidase activity"/>
    <property type="evidence" value="ECO:0007669"/>
    <property type="project" value="UniProtKB-UniRule"/>
</dbReference>
<dbReference type="GO" id="GO:0008615">
    <property type="term" value="P:pyridoxine biosynthetic process"/>
    <property type="evidence" value="ECO:0007669"/>
    <property type="project" value="UniProtKB-KW"/>
</dbReference>
<dbReference type="Gene3D" id="2.30.110.10">
    <property type="entry name" value="Electron Transport, Fmn-binding Protein, Chain A"/>
    <property type="match status" value="1"/>
</dbReference>
<dbReference type="HAMAP" id="MF_01629">
    <property type="entry name" value="PdxH"/>
    <property type="match status" value="1"/>
</dbReference>
<dbReference type="InterPro" id="IPR000659">
    <property type="entry name" value="Pyridox_Oxase"/>
</dbReference>
<dbReference type="InterPro" id="IPR019740">
    <property type="entry name" value="Pyridox_Oxase_CS"/>
</dbReference>
<dbReference type="InterPro" id="IPR011576">
    <property type="entry name" value="Pyridox_Oxase_N"/>
</dbReference>
<dbReference type="InterPro" id="IPR019576">
    <property type="entry name" value="Pyridoxamine_oxidase_dimer_C"/>
</dbReference>
<dbReference type="InterPro" id="IPR012349">
    <property type="entry name" value="Split_barrel_FMN-bd"/>
</dbReference>
<dbReference type="NCBIfam" id="TIGR00558">
    <property type="entry name" value="pdxH"/>
    <property type="match status" value="1"/>
</dbReference>
<dbReference type="NCBIfam" id="NF004231">
    <property type="entry name" value="PRK05679.1"/>
    <property type="match status" value="1"/>
</dbReference>
<dbReference type="PANTHER" id="PTHR10851:SF0">
    <property type="entry name" value="PYRIDOXINE-5'-PHOSPHATE OXIDASE"/>
    <property type="match status" value="1"/>
</dbReference>
<dbReference type="PANTHER" id="PTHR10851">
    <property type="entry name" value="PYRIDOXINE-5-PHOSPHATE OXIDASE"/>
    <property type="match status" value="1"/>
</dbReference>
<dbReference type="Pfam" id="PF10590">
    <property type="entry name" value="PNP_phzG_C"/>
    <property type="match status" value="1"/>
</dbReference>
<dbReference type="Pfam" id="PF01243">
    <property type="entry name" value="PNPOx_N"/>
    <property type="match status" value="1"/>
</dbReference>
<dbReference type="PIRSF" id="PIRSF000190">
    <property type="entry name" value="Pyd_amn-ph_oxd"/>
    <property type="match status" value="1"/>
</dbReference>
<dbReference type="SUPFAM" id="SSF50475">
    <property type="entry name" value="FMN-binding split barrel"/>
    <property type="match status" value="1"/>
</dbReference>
<dbReference type="PROSITE" id="PS01064">
    <property type="entry name" value="PYRIDOX_OXIDASE"/>
    <property type="match status" value="1"/>
</dbReference>
<evidence type="ECO:0000255" key="1">
    <source>
        <dbReference type="HAMAP-Rule" id="MF_01629"/>
    </source>
</evidence>
<sequence>MLIDKTNISNIRREYISGQLRHTDLTNQPIQLFSVWLHQAYFSKIPDPTAMCLATVDHTGQPYQRVVLLKNFTNKEMIFYTNLSSRKAMHLANNPKVSLCFLWNVIDRQVIITGSVDKLPEKEVLKYFYTRPKNNQISTWVSNQSKVISSKDLLENKFLEFKKNHLHKKVPFPEFWGGYKININSMEFWQGGTHRLHDRFIYQRYKHTWRIYRLSP</sequence>
<name>PDXH_BLOPB</name>
<protein>
    <recommendedName>
        <fullName evidence="1">Pyridoxine/pyridoxamine 5'-phosphate oxidase</fullName>
        <ecNumber evidence="1">1.4.3.5</ecNumber>
    </recommendedName>
    <alternativeName>
        <fullName evidence="1">PNP/PMP oxidase</fullName>
        <shortName evidence="1">PNPOx</shortName>
    </alternativeName>
    <alternativeName>
        <fullName evidence="1">Pyridoxal 5'-phosphate synthase</fullName>
    </alternativeName>
</protein>
<proteinExistence type="inferred from homology"/>
<organism>
    <name type="scientific">Blochmanniella pennsylvanica (strain BPEN)</name>
    <dbReference type="NCBI Taxonomy" id="291272"/>
    <lineage>
        <taxon>Bacteria</taxon>
        <taxon>Pseudomonadati</taxon>
        <taxon>Pseudomonadota</taxon>
        <taxon>Gammaproteobacteria</taxon>
        <taxon>Enterobacterales</taxon>
        <taxon>Enterobacteriaceae</taxon>
        <taxon>ant endosymbionts</taxon>
        <taxon>Candidatus Blochmanniella</taxon>
    </lineage>
</organism>